<dbReference type="EC" id="6.3.5.7" evidence="1"/>
<dbReference type="EMBL" id="BA000017">
    <property type="protein sequence ID" value="BAB58062.1"/>
    <property type="molecule type" value="Genomic_DNA"/>
</dbReference>
<dbReference type="RefSeq" id="WP_000027919.1">
    <property type="nucleotide sequence ID" value="NC_002758.2"/>
</dbReference>
<dbReference type="PDB" id="2DF4">
    <property type="method" value="X-ray"/>
    <property type="resolution" value="3.20 A"/>
    <property type="chains" value="A=1-485"/>
</dbReference>
<dbReference type="PDB" id="2DQN">
    <property type="method" value="X-ray"/>
    <property type="resolution" value="2.55 A"/>
    <property type="chains" value="A=1-485"/>
</dbReference>
<dbReference type="PDB" id="2F2A">
    <property type="method" value="X-ray"/>
    <property type="resolution" value="2.30 A"/>
    <property type="chains" value="A=1-485"/>
</dbReference>
<dbReference type="PDB" id="2G5H">
    <property type="method" value="X-ray"/>
    <property type="resolution" value="2.50 A"/>
    <property type="chains" value="A=1-485"/>
</dbReference>
<dbReference type="PDB" id="2G5I">
    <property type="method" value="X-ray"/>
    <property type="resolution" value="3.35 A"/>
    <property type="chains" value="A=1-485"/>
</dbReference>
<dbReference type="PDB" id="3IP4">
    <property type="method" value="X-ray"/>
    <property type="resolution" value="1.90 A"/>
    <property type="chains" value="A=1-485"/>
</dbReference>
<dbReference type="PDBsum" id="2DF4"/>
<dbReference type="PDBsum" id="2DQN"/>
<dbReference type="PDBsum" id="2F2A"/>
<dbReference type="PDBsum" id="2G5H"/>
<dbReference type="PDBsum" id="2G5I"/>
<dbReference type="PDBsum" id="3IP4"/>
<dbReference type="SMR" id="P63488"/>
<dbReference type="KEGG" id="sav:SAV1900"/>
<dbReference type="HOGENOM" id="CLU_009600_0_3_9"/>
<dbReference type="PhylomeDB" id="P63488"/>
<dbReference type="BRENDA" id="6.3.5.7">
    <property type="organism ID" value="3352"/>
</dbReference>
<dbReference type="EvolutionaryTrace" id="P63488"/>
<dbReference type="Proteomes" id="UP000002481">
    <property type="component" value="Chromosome"/>
</dbReference>
<dbReference type="GO" id="GO:0030956">
    <property type="term" value="C:glutamyl-tRNA(Gln) amidotransferase complex"/>
    <property type="evidence" value="ECO:0007669"/>
    <property type="project" value="InterPro"/>
</dbReference>
<dbReference type="GO" id="GO:0005524">
    <property type="term" value="F:ATP binding"/>
    <property type="evidence" value="ECO:0007669"/>
    <property type="project" value="UniProtKB-KW"/>
</dbReference>
<dbReference type="GO" id="GO:0050567">
    <property type="term" value="F:glutaminyl-tRNA synthase (glutamine-hydrolyzing) activity"/>
    <property type="evidence" value="ECO:0007669"/>
    <property type="project" value="UniProtKB-UniRule"/>
</dbReference>
<dbReference type="GO" id="GO:0006412">
    <property type="term" value="P:translation"/>
    <property type="evidence" value="ECO:0007669"/>
    <property type="project" value="UniProtKB-UniRule"/>
</dbReference>
<dbReference type="Gene3D" id="3.90.1300.10">
    <property type="entry name" value="Amidase signature (AS) domain"/>
    <property type="match status" value="1"/>
</dbReference>
<dbReference type="HAMAP" id="MF_00120">
    <property type="entry name" value="GatA"/>
    <property type="match status" value="1"/>
</dbReference>
<dbReference type="InterPro" id="IPR000120">
    <property type="entry name" value="Amidase"/>
</dbReference>
<dbReference type="InterPro" id="IPR020556">
    <property type="entry name" value="Amidase_CS"/>
</dbReference>
<dbReference type="InterPro" id="IPR023631">
    <property type="entry name" value="Amidase_dom"/>
</dbReference>
<dbReference type="InterPro" id="IPR036928">
    <property type="entry name" value="AS_sf"/>
</dbReference>
<dbReference type="InterPro" id="IPR004412">
    <property type="entry name" value="GatA"/>
</dbReference>
<dbReference type="NCBIfam" id="TIGR00132">
    <property type="entry name" value="gatA"/>
    <property type="match status" value="1"/>
</dbReference>
<dbReference type="PANTHER" id="PTHR11895:SF151">
    <property type="entry name" value="GLUTAMYL-TRNA(GLN) AMIDOTRANSFERASE SUBUNIT A"/>
    <property type="match status" value="1"/>
</dbReference>
<dbReference type="PANTHER" id="PTHR11895">
    <property type="entry name" value="TRANSAMIDASE"/>
    <property type="match status" value="1"/>
</dbReference>
<dbReference type="Pfam" id="PF01425">
    <property type="entry name" value="Amidase"/>
    <property type="match status" value="1"/>
</dbReference>
<dbReference type="SUPFAM" id="SSF75304">
    <property type="entry name" value="Amidase signature (AS) enzymes"/>
    <property type="match status" value="1"/>
</dbReference>
<dbReference type="PROSITE" id="PS00571">
    <property type="entry name" value="AMIDASES"/>
    <property type="match status" value="1"/>
</dbReference>
<name>GATA_STAAM</name>
<evidence type="ECO:0000255" key="1">
    <source>
        <dbReference type="HAMAP-Rule" id="MF_00120"/>
    </source>
</evidence>
<evidence type="ECO:0007829" key="2">
    <source>
        <dbReference type="PDB" id="2DF4"/>
    </source>
</evidence>
<evidence type="ECO:0007829" key="3">
    <source>
        <dbReference type="PDB" id="3IP4"/>
    </source>
</evidence>
<protein>
    <recommendedName>
        <fullName evidence="1">Glutamyl-tRNA(Gln) amidotransferase subunit A</fullName>
        <shortName evidence="1">Glu-ADT subunit A</shortName>
        <ecNumber evidence="1">6.3.5.7</ecNumber>
    </recommendedName>
</protein>
<organism>
    <name type="scientific">Staphylococcus aureus (strain Mu50 / ATCC 700699)</name>
    <dbReference type="NCBI Taxonomy" id="158878"/>
    <lineage>
        <taxon>Bacteria</taxon>
        <taxon>Bacillati</taxon>
        <taxon>Bacillota</taxon>
        <taxon>Bacilli</taxon>
        <taxon>Bacillales</taxon>
        <taxon>Staphylococcaceae</taxon>
        <taxon>Staphylococcus</taxon>
    </lineage>
</organism>
<comment type="function">
    <text evidence="1">Allows the formation of correctly charged Gln-tRNA(Gln) through the transamidation of misacylated Glu-tRNA(Gln) in organisms which lack glutaminyl-tRNA synthetase. The reaction takes place in the presence of glutamine and ATP through an activated gamma-phospho-Glu-tRNA(Gln).</text>
</comment>
<comment type="catalytic activity">
    <reaction evidence="1">
        <text>L-glutamyl-tRNA(Gln) + L-glutamine + ATP + H2O = L-glutaminyl-tRNA(Gln) + L-glutamate + ADP + phosphate + H(+)</text>
        <dbReference type="Rhea" id="RHEA:17521"/>
        <dbReference type="Rhea" id="RHEA-COMP:9681"/>
        <dbReference type="Rhea" id="RHEA-COMP:9684"/>
        <dbReference type="ChEBI" id="CHEBI:15377"/>
        <dbReference type="ChEBI" id="CHEBI:15378"/>
        <dbReference type="ChEBI" id="CHEBI:29985"/>
        <dbReference type="ChEBI" id="CHEBI:30616"/>
        <dbReference type="ChEBI" id="CHEBI:43474"/>
        <dbReference type="ChEBI" id="CHEBI:58359"/>
        <dbReference type="ChEBI" id="CHEBI:78520"/>
        <dbReference type="ChEBI" id="CHEBI:78521"/>
        <dbReference type="ChEBI" id="CHEBI:456216"/>
        <dbReference type="EC" id="6.3.5.7"/>
    </reaction>
</comment>
<comment type="subunit">
    <text evidence="1">Heterotrimer of A, B and C subunits.</text>
</comment>
<comment type="similarity">
    <text evidence="1">Belongs to the amidase family. GatA subfamily.</text>
</comment>
<sequence>MSIRYESVENLLTLIKDKKIKPSDVVKDIYDAIEETDPTIKSFLALDKENAIKKAQELDELQAKDQMDGKLFGIPMGIKDNIITNGLETTCASKMLEGFVPIYESTVMEKLHKENAVLIGKLNMDEFAMGGSTETSYFKKTVNPFDHKAVPGGSSGGSAAAVAAGLVPLSLGSDTGGSIRQPAAYCGVVGMKPTYGRVSRFGLVAFASSLDQIGPLTRNVKDNAIVLEAISGADVNDSTSAPVDDVDFTSEIGKDIKGLKVALPKEYLGEGVADDVKEAVQNAVETLKSLGAVVEEVSLPNTKFGIPSYYVIASSEASSNLSRFDGIRYGYHSKEAHSLEELYKMSRSEGFGKEVKRRIFLGTFALSSGYYDAYYKKSQKVRTLIKNDFDKVFENYDVVVGPTAPTTAFNLGEEIDDPLTMYANDLLTTPVNLAGLPGISVPCGQSNGRPIGLQFIGKPFDEKTLYRVAYQYETQYNLHDVYEKL</sequence>
<proteinExistence type="evidence at protein level"/>
<gene>
    <name evidence="1" type="primary">gatA</name>
    <name type="ordered locus">SAV1900</name>
</gene>
<feature type="chain" id="PRO_0000105199" description="Glutamyl-tRNA(Gln) amidotransferase subunit A">
    <location>
        <begin position="1"/>
        <end position="485"/>
    </location>
</feature>
<feature type="active site" description="Charge relay system" evidence="1">
    <location>
        <position position="79"/>
    </location>
</feature>
<feature type="active site" description="Charge relay system" evidence="1">
    <location>
        <position position="154"/>
    </location>
</feature>
<feature type="active site" description="Acyl-ester intermediate" evidence="1">
    <location>
        <position position="178"/>
    </location>
</feature>
<feature type="helix" evidence="3">
    <location>
        <begin position="3"/>
        <end position="5"/>
    </location>
</feature>
<feature type="helix" evidence="3">
    <location>
        <begin position="8"/>
        <end position="16"/>
    </location>
</feature>
<feature type="helix" evidence="3">
    <location>
        <begin position="22"/>
        <end position="40"/>
    </location>
</feature>
<feature type="strand" evidence="3">
    <location>
        <begin position="43"/>
        <end position="46"/>
    </location>
</feature>
<feature type="helix" evidence="3">
    <location>
        <begin position="48"/>
        <end position="63"/>
    </location>
</feature>
<feature type="turn" evidence="3">
    <location>
        <begin position="70"/>
        <end position="73"/>
    </location>
</feature>
<feature type="strand" evidence="3">
    <location>
        <begin position="75"/>
        <end position="79"/>
    </location>
</feature>
<feature type="helix" evidence="3">
    <location>
        <begin position="94"/>
        <end position="96"/>
    </location>
</feature>
<feature type="helix" evidence="3">
    <location>
        <begin position="106"/>
        <end position="113"/>
    </location>
</feature>
<feature type="strand" evidence="3">
    <location>
        <begin position="117"/>
        <end position="122"/>
    </location>
</feature>
<feature type="helix" evidence="3">
    <location>
        <begin position="126"/>
        <end position="128"/>
    </location>
</feature>
<feature type="strand" evidence="3">
    <location>
        <begin position="131"/>
        <end position="133"/>
    </location>
</feature>
<feature type="strand" evidence="3">
    <location>
        <begin position="153"/>
        <end position="155"/>
    </location>
</feature>
<feature type="helix" evidence="3">
    <location>
        <begin position="156"/>
        <end position="163"/>
    </location>
</feature>
<feature type="strand" evidence="3">
    <location>
        <begin position="168"/>
        <end position="173"/>
    </location>
</feature>
<feature type="strand" evidence="3">
    <location>
        <begin position="175"/>
        <end position="177"/>
    </location>
</feature>
<feature type="helix" evidence="3">
    <location>
        <begin position="180"/>
        <end position="185"/>
    </location>
</feature>
<feature type="strand" evidence="3">
    <location>
        <begin position="189"/>
        <end position="192"/>
    </location>
</feature>
<feature type="turn" evidence="3">
    <location>
        <begin position="208"/>
        <end position="210"/>
    </location>
</feature>
<feature type="strand" evidence="3">
    <location>
        <begin position="213"/>
        <end position="219"/>
    </location>
</feature>
<feature type="helix" evidence="3">
    <location>
        <begin position="220"/>
        <end position="230"/>
    </location>
</feature>
<feature type="turn" evidence="3">
    <location>
        <begin position="250"/>
        <end position="253"/>
    </location>
</feature>
<feature type="strand" evidence="3">
    <location>
        <begin position="260"/>
        <end position="264"/>
    </location>
</feature>
<feature type="helix" evidence="3">
    <location>
        <begin position="265"/>
        <end position="268"/>
    </location>
</feature>
<feature type="strand" evidence="2">
    <location>
        <begin position="269"/>
        <end position="272"/>
    </location>
</feature>
<feature type="helix" evidence="3">
    <location>
        <begin position="274"/>
        <end position="289"/>
    </location>
</feature>
<feature type="strand" evidence="3">
    <location>
        <begin position="293"/>
        <end position="297"/>
    </location>
</feature>
<feature type="helix" evidence="3">
    <location>
        <begin position="302"/>
        <end position="304"/>
    </location>
</feature>
<feature type="helix" evidence="3">
    <location>
        <begin position="305"/>
        <end position="320"/>
    </location>
</feature>
<feature type="turn" evidence="3">
    <location>
        <begin position="321"/>
        <end position="323"/>
    </location>
</feature>
<feature type="strand" evidence="3">
    <location>
        <begin position="325"/>
        <end position="330"/>
    </location>
</feature>
<feature type="helix" evidence="3">
    <location>
        <begin position="339"/>
        <end position="350"/>
    </location>
</feature>
<feature type="helix" evidence="3">
    <location>
        <begin position="353"/>
        <end position="366"/>
    </location>
</feature>
<feature type="turn" evidence="3">
    <location>
        <begin position="368"/>
        <end position="374"/>
    </location>
</feature>
<feature type="helix" evidence="3">
    <location>
        <begin position="375"/>
        <end position="393"/>
    </location>
</feature>
<feature type="strand" evidence="3">
    <location>
        <begin position="397"/>
        <end position="407"/>
    </location>
</feature>
<feature type="turn" evidence="3">
    <location>
        <begin position="411"/>
        <end position="413"/>
    </location>
</feature>
<feature type="helix" evidence="3">
    <location>
        <begin position="418"/>
        <end position="422"/>
    </location>
</feature>
<feature type="helix" evidence="3">
    <location>
        <begin position="423"/>
        <end position="425"/>
    </location>
</feature>
<feature type="turn" evidence="3">
    <location>
        <begin position="426"/>
        <end position="428"/>
    </location>
</feature>
<feature type="helix" evidence="3">
    <location>
        <begin position="429"/>
        <end position="434"/>
    </location>
</feature>
<feature type="strand" evidence="3">
    <location>
        <begin position="438"/>
        <end position="446"/>
    </location>
</feature>
<feature type="strand" evidence="3">
    <location>
        <begin position="449"/>
        <end position="456"/>
    </location>
</feature>
<feature type="helix" evidence="3">
    <location>
        <begin position="462"/>
        <end position="475"/>
    </location>
</feature>
<feature type="turn" evidence="3">
    <location>
        <begin position="479"/>
        <end position="481"/>
    </location>
</feature>
<feature type="helix" evidence="3">
    <location>
        <begin position="482"/>
        <end position="484"/>
    </location>
</feature>
<reference key="1">
    <citation type="journal article" date="2001" name="Lancet">
        <title>Whole genome sequencing of meticillin-resistant Staphylococcus aureus.</title>
        <authorList>
            <person name="Kuroda M."/>
            <person name="Ohta T."/>
            <person name="Uchiyama I."/>
            <person name="Baba T."/>
            <person name="Yuzawa H."/>
            <person name="Kobayashi I."/>
            <person name="Cui L."/>
            <person name="Oguchi A."/>
            <person name="Aoki K."/>
            <person name="Nagai Y."/>
            <person name="Lian J.-Q."/>
            <person name="Ito T."/>
            <person name="Kanamori M."/>
            <person name="Matsumaru H."/>
            <person name="Maruyama A."/>
            <person name="Murakami H."/>
            <person name="Hosoyama A."/>
            <person name="Mizutani-Ui Y."/>
            <person name="Takahashi N.K."/>
            <person name="Sawano T."/>
            <person name="Inoue R."/>
            <person name="Kaito C."/>
            <person name="Sekimizu K."/>
            <person name="Hirakawa H."/>
            <person name="Kuhara S."/>
            <person name="Goto S."/>
            <person name="Yabuzaki J."/>
            <person name="Kanehisa M."/>
            <person name="Yamashita A."/>
            <person name="Oshima K."/>
            <person name="Furuya K."/>
            <person name="Yoshino C."/>
            <person name="Shiba T."/>
            <person name="Hattori M."/>
            <person name="Ogasawara N."/>
            <person name="Hayashi H."/>
            <person name="Hiramatsu K."/>
        </authorList>
    </citation>
    <scope>NUCLEOTIDE SEQUENCE [LARGE SCALE GENOMIC DNA]</scope>
    <source>
        <strain>Mu50 / ATCC 700699</strain>
    </source>
</reference>
<accession>P63488</accession>
<accession>Q99SY6</accession>
<keyword id="KW-0002">3D-structure</keyword>
<keyword id="KW-0067">ATP-binding</keyword>
<keyword id="KW-0436">Ligase</keyword>
<keyword id="KW-0547">Nucleotide-binding</keyword>
<keyword id="KW-0648">Protein biosynthesis</keyword>